<feature type="signal peptide" evidence="2">
    <location>
        <begin position="1"/>
        <end position="21"/>
    </location>
</feature>
<feature type="propeptide" id="PRO_0000429191" evidence="1">
    <location>
        <begin position="22"/>
        <end position="33"/>
    </location>
</feature>
<feature type="peptide" id="PRO_0000429192" description="Antimicrobial peptide HsAp1">
    <location>
        <begin position="37"/>
        <end position="65"/>
    </location>
</feature>
<feature type="propeptide" id="PRO_0000429193" evidence="7">
    <location>
        <begin position="69"/>
        <end position="74"/>
    </location>
</feature>
<feature type="modified residue" description="Proline amide" evidence="7">
    <location>
        <position position="65"/>
    </location>
</feature>
<protein>
    <recommendedName>
        <fullName evidence="4 6">Antimicrobial peptide HsAp1</fullName>
        <shortName evidence="4">HsAp</shortName>
    </recommendedName>
    <alternativeName>
        <fullName evidence="5">Non-disulfide-bridged peptide 3.3</fullName>
        <shortName evidence="5">NDBP-3.3</shortName>
    </alternativeName>
</protein>
<organism>
    <name type="scientific">Heterometrus spinifer</name>
    <name type="common">Asia giant forest scorpion</name>
    <name type="synonym">Malaysian black scorpion</name>
    <dbReference type="NCBI Taxonomy" id="118530"/>
    <lineage>
        <taxon>Eukaryota</taxon>
        <taxon>Metazoa</taxon>
        <taxon>Ecdysozoa</taxon>
        <taxon>Arthropoda</taxon>
        <taxon>Chelicerata</taxon>
        <taxon>Arachnida</taxon>
        <taxon>Scorpiones</taxon>
        <taxon>Iurida</taxon>
        <taxon>Scorpionoidea</taxon>
        <taxon>Scorpionidae</taxon>
        <taxon>Heterometrinae</taxon>
        <taxon>Heterometrus</taxon>
    </lineage>
</organism>
<comment type="function">
    <text evidence="3 6">Possesses antimicrobial activity against both Gram-negative (MIC=23.8-51.2 uM) and Gram-positive (MIC=11.8-46.5 uM) bacteria, as well as against the fungus C.tropicalis (MIC=48.6 uM). Also possesses a relatively high hemolytic activity (PubMed:23000095). May act by disrupting the integrity of the bacterial cell membrane (Probable).</text>
</comment>
<comment type="subcellular location">
    <subcellularLocation>
        <location evidence="7">Secreted</location>
    </subcellularLocation>
    <subcellularLocation>
        <location evidence="6">Target cell membrane</location>
    </subcellularLocation>
</comment>
<comment type="tissue specificity">
    <text evidence="7">Expressed by the venom gland.</text>
</comment>
<comment type="similarity">
    <text evidence="6">Belongs to the non-disulfide-bridged peptide (NDBP) superfamily. Medium-length antimicrobial peptide (group 3) family.</text>
</comment>
<proteinExistence type="evidence at protein level"/>
<sequence length="74" mass="8349">MSRRVILTLVLVTILVKTMAGMESKKVETTDEIKKRSGTSEKERESGRLLGVVKRLIVCFRSPFPGRRAISEQT</sequence>
<evidence type="ECO:0000250" key="1"/>
<evidence type="ECO:0000255" key="2"/>
<evidence type="ECO:0000269" key="3">
    <source>
    </source>
</evidence>
<evidence type="ECO:0000303" key="4">
    <source>
    </source>
</evidence>
<evidence type="ECO:0000303" key="5">
    <source>
    </source>
</evidence>
<evidence type="ECO:0000305" key="6"/>
<evidence type="ECO:0000305" key="7">
    <source>
    </source>
</evidence>
<accession>P0DMI7</accession>
<accession>A0A096VHN4</accession>
<reference key="1">
    <citation type="journal article" date="2012" name="Peptides">
        <title>A novel class of antimicrobial peptides from the scorpion Heterometrus spinifer.</title>
        <authorList>
            <person name="Nie Y."/>
            <person name="Zeng X.C."/>
            <person name="Yang Y."/>
            <person name="Luo F."/>
            <person name="Luo X."/>
            <person name="Wu S."/>
            <person name="Zhang L."/>
            <person name="Zhou J."/>
        </authorList>
    </citation>
    <scope>NUCLEOTIDE SEQUENCE [GENOMIC DNA / MRNA]</scope>
    <scope>SYNTHESIS OF 37-65</scope>
    <scope>PROBABLE AMIDATION AT PRO-65</scope>
    <scope>FUNCTION</scope>
    <source>
        <tissue>Venom gland</tissue>
    </source>
</reference>
<reference key="2">
    <citation type="journal article" date="2014" name="Peptides">
        <title>Scorpion venom peptides with no disulfide bridges: a review.</title>
        <authorList>
            <person name="Almaaytah A."/>
            <person name="Albalas Q."/>
        </authorList>
    </citation>
    <scope>NOMENCLATURE</scope>
</reference>
<dbReference type="EMBL" id="JX311701">
    <property type="protein sequence ID" value="AFR60584.1"/>
    <property type="molecule type" value="mRNA"/>
</dbReference>
<dbReference type="GO" id="GO:0005576">
    <property type="term" value="C:extracellular region"/>
    <property type="evidence" value="ECO:0007669"/>
    <property type="project" value="UniProtKB-SubCell"/>
</dbReference>
<dbReference type="GO" id="GO:0016020">
    <property type="term" value="C:membrane"/>
    <property type="evidence" value="ECO:0007669"/>
    <property type="project" value="UniProtKB-KW"/>
</dbReference>
<dbReference type="GO" id="GO:0044218">
    <property type="term" value="C:other organism cell membrane"/>
    <property type="evidence" value="ECO:0007669"/>
    <property type="project" value="UniProtKB-KW"/>
</dbReference>
<dbReference type="GO" id="GO:0042742">
    <property type="term" value="P:defense response to bacterium"/>
    <property type="evidence" value="ECO:0007669"/>
    <property type="project" value="UniProtKB-KW"/>
</dbReference>
<dbReference type="GO" id="GO:0050832">
    <property type="term" value="P:defense response to fungus"/>
    <property type="evidence" value="ECO:0007669"/>
    <property type="project" value="UniProtKB-KW"/>
</dbReference>
<dbReference type="GO" id="GO:0031640">
    <property type="term" value="P:killing of cells of another organism"/>
    <property type="evidence" value="ECO:0007669"/>
    <property type="project" value="UniProtKB-KW"/>
</dbReference>
<name>NDB31_HETSP</name>
<keyword id="KW-0027">Amidation</keyword>
<keyword id="KW-0044">Antibiotic</keyword>
<keyword id="KW-0929">Antimicrobial</keyword>
<keyword id="KW-0165">Cleavage on pair of basic residues</keyword>
<keyword id="KW-0204">Cytolysis</keyword>
<keyword id="KW-0295">Fungicide</keyword>
<keyword id="KW-0472">Membrane</keyword>
<keyword id="KW-0964">Secreted</keyword>
<keyword id="KW-0732">Signal</keyword>
<keyword id="KW-1052">Target cell membrane</keyword>
<keyword id="KW-1053">Target membrane</keyword>